<dbReference type="EMBL" id="JH725192">
    <property type="protein sequence ID" value="EJP62055.1"/>
    <property type="molecule type" value="Genomic_DNA"/>
</dbReference>
<dbReference type="RefSeq" id="XP_008602298.1">
    <property type="nucleotide sequence ID" value="XM_008604076.1"/>
</dbReference>
<dbReference type="SMR" id="J4VU52"/>
<dbReference type="STRING" id="655819.J4VU52"/>
<dbReference type="GeneID" id="19891991"/>
<dbReference type="HOGENOM" id="CLU_010591_0_0_1"/>
<dbReference type="InParanoid" id="J4VU52"/>
<dbReference type="OrthoDB" id="8206at474943"/>
<dbReference type="PHI-base" id="PHI:7380"/>
<dbReference type="Proteomes" id="UP000002762">
    <property type="component" value="Unassembled WGS sequence"/>
</dbReference>
<dbReference type="GO" id="GO:0008061">
    <property type="term" value="F:chitin binding"/>
    <property type="evidence" value="ECO:0007669"/>
    <property type="project" value="UniProtKB-KW"/>
</dbReference>
<dbReference type="CDD" id="cd00118">
    <property type="entry name" value="LysM"/>
    <property type="match status" value="2"/>
</dbReference>
<dbReference type="Gene3D" id="3.10.350.10">
    <property type="entry name" value="LysM domain"/>
    <property type="match status" value="3"/>
</dbReference>
<dbReference type="InterPro" id="IPR052210">
    <property type="entry name" value="LysM1-like"/>
</dbReference>
<dbReference type="InterPro" id="IPR018392">
    <property type="entry name" value="LysM_dom"/>
</dbReference>
<dbReference type="InterPro" id="IPR036779">
    <property type="entry name" value="LysM_dom_sf"/>
</dbReference>
<dbReference type="PANTHER" id="PTHR34997">
    <property type="entry name" value="AM15"/>
    <property type="match status" value="1"/>
</dbReference>
<dbReference type="PANTHER" id="PTHR34997:SF1">
    <property type="entry name" value="PEPTIDOGLYCAN-BINDING LYSIN DOMAIN"/>
    <property type="match status" value="1"/>
</dbReference>
<dbReference type="Pfam" id="PF01476">
    <property type="entry name" value="LysM"/>
    <property type="match status" value="2"/>
</dbReference>
<dbReference type="SMART" id="SM00257">
    <property type="entry name" value="LysM"/>
    <property type="match status" value="2"/>
</dbReference>
<dbReference type="SUPFAM" id="SSF54106">
    <property type="entry name" value="LysM domain"/>
    <property type="match status" value="2"/>
</dbReference>
<dbReference type="PROSITE" id="PS51782">
    <property type="entry name" value="LYSM"/>
    <property type="match status" value="3"/>
</dbReference>
<evidence type="ECO:0000255" key="1"/>
<evidence type="ECO:0000255" key="2">
    <source>
        <dbReference type="PROSITE-ProRule" id="PRU01118"/>
    </source>
</evidence>
<evidence type="ECO:0000256" key="3">
    <source>
        <dbReference type="SAM" id="MobiDB-lite"/>
    </source>
</evidence>
<evidence type="ECO:0000269" key="4">
    <source>
    </source>
</evidence>
<evidence type="ECO:0000303" key="5">
    <source>
    </source>
</evidence>
<evidence type="ECO:0000305" key="6"/>
<evidence type="ECO:0000305" key="7">
    <source>
    </source>
</evidence>
<sequence>MQRHLLLGLAGLPALLSAQRVSVTCSFATVAANGETCDSMAATWGLDTATFQSLNPKAKCPEVIGGEQYCVVGTVTTVTGEPTTAPATTSTQTTTTTTTEVTSTTVPGNGITTPVPVQPNLVSNCNKFYFVNKGDNCADITARYNLDLSDFLEWNPKAGNSCSGLWANAYACVSVIGYVPKPKPKPTSTSTKPPTATGNGIPTPLPTQPGMTDGCNKFYLVKPGETCADIASRNGVSLSDFLQWNPHAGNACSGLWANAYACLGMVAFSLKSRFRVDCTGDAHNVVNIAGDQGQCINTDCSVGSLEIAAAGVCPDGEVQISYWEQPGCQGKWFGYGYAKRGECRGLWTNGWKFKAMHLRCAKSQDDCVNKGSCAYDPEPAQGVC</sequence>
<accession>J4VU52</accession>
<organism>
    <name type="scientific">Beauveria bassiana (strain ARSEF 2860)</name>
    <name type="common">White muscardine disease fungus</name>
    <name type="synonym">Tritirachium shiotae</name>
    <dbReference type="NCBI Taxonomy" id="655819"/>
    <lineage>
        <taxon>Eukaryota</taxon>
        <taxon>Fungi</taxon>
        <taxon>Dikarya</taxon>
        <taxon>Ascomycota</taxon>
        <taxon>Pezizomycotina</taxon>
        <taxon>Sordariomycetes</taxon>
        <taxon>Hypocreomycetidae</taxon>
        <taxon>Hypocreales</taxon>
        <taxon>Cordycipitaceae</taxon>
        <taxon>Beauveria</taxon>
    </lineage>
</organism>
<keyword id="KW-0147">Chitin-binding</keyword>
<keyword id="KW-1185">Reference proteome</keyword>
<keyword id="KW-0677">Repeat</keyword>
<keyword id="KW-0732">Signal</keyword>
<keyword id="KW-0843">Virulence</keyword>
<name>LYSM7_BEAB2</name>
<proteinExistence type="evidence at transcript level"/>
<gene>
    <name evidence="5" type="primary">Blys7</name>
    <name type="ORF">BBA_08979</name>
</gene>
<reference key="1">
    <citation type="journal article" date="2012" name="Sci. Rep.">
        <title>Genomic perspectives on the evolution of fungal entomopathogenicity in Beauveria bassiana.</title>
        <authorList>
            <person name="Xiao G."/>
            <person name="Ying S.-H."/>
            <person name="Zheng P."/>
            <person name="Wang Z.-L."/>
            <person name="Zhang S."/>
            <person name="Xie X.-Q."/>
            <person name="Shang Y."/>
            <person name="St Leger R.J."/>
            <person name="Zhao G.-P."/>
            <person name="Wang C."/>
            <person name="Feng M.-G."/>
        </authorList>
    </citation>
    <scope>NUCLEOTIDE SEQUENCE [LARGE SCALE GENOMIC DNA]</scope>
    <source>
        <strain>ARSEF 2860</strain>
    </source>
</reference>
<reference key="2">
    <citation type="journal article" date="2017" name="PLoS Pathog.">
        <title>Divergent LysM effectors contribute to the virulence of Beauveria bassiana by evasion of insect immune defenses.</title>
        <authorList>
            <person name="Cen K."/>
            <person name="Li B."/>
            <person name="Lu Y."/>
            <person name="Zhang S."/>
            <person name="Wang C."/>
        </authorList>
    </citation>
    <scope>FUNCTION</scope>
    <scope>INDUCTION</scope>
    <scope>DISRUPTION PHENOTYPE</scope>
</reference>
<feature type="signal peptide" evidence="1">
    <location>
        <begin position="1"/>
        <end position="18"/>
    </location>
</feature>
<feature type="chain" id="PRO_5003781557" description="Secreted LysM effector Blys7">
    <location>
        <begin position="19"/>
        <end position="384"/>
    </location>
</feature>
<feature type="domain" description="LysM 1" evidence="2">
    <location>
        <begin position="27"/>
        <end position="71"/>
    </location>
</feature>
<feature type="domain" description="LysM 2" evidence="2">
    <location>
        <begin position="127"/>
        <end position="173"/>
    </location>
</feature>
<feature type="domain" description="LysM 3" evidence="2">
    <location>
        <begin position="217"/>
        <end position="263"/>
    </location>
</feature>
<feature type="region of interest" description="Disordered" evidence="3">
    <location>
        <begin position="81"/>
        <end position="112"/>
    </location>
</feature>
<feature type="region of interest" description="Disordered" evidence="3">
    <location>
        <begin position="183"/>
        <end position="206"/>
    </location>
</feature>
<feature type="compositionally biased region" description="Low complexity" evidence="3">
    <location>
        <begin position="81"/>
        <end position="106"/>
    </location>
</feature>
<feature type="compositionally biased region" description="Low complexity" evidence="3">
    <location>
        <begin position="186"/>
        <end position="195"/>
    </location>
</feature>
<protein>
    <recommendedName>
        <fullName evidence="5">Secreted LysM effector Blys7</fullName>
    </recommendedName>
    <alternativeName>
        <fullName evidence="5">LysM domain-containing protein 7</fullName>
    </alternativeName>
</protein>
<comment type="function">
    <text evidence="7">Might have a role in sequestration of chitin oligosaccharides (breakdown products of fungal cell walls that are released during invasion and act as triggers of host immunity) to dampen host defense.</text>
</comment>
<comment type="induction">
    <text evidence="4">Expressed during in vivo infection of insect hosts.</text>
</comment>
<comment type="domain">
    <text evidence="7">The LysM (lysin motif) domains are small globular domains involved in binding chitin in eukaryotes. Blys7 contains 3 LysM domains.</text>
</comment>
<comment type="disruption phenotype">
    <text evidence="4">Does not affect virulence to host insects.</text>
</comment>
<comment type="miscellaneous">
    <text evidence="6">In plants, chitin acts as a microbe-associated molecular pattern (MAMP) that is recognized by lysin motif (LysM)-containing plant cell surface-localized pattern recognition receptors (PRRs) that activate a plethora of downstream immune responses.</text>
</comment>
<comment type="similarity">
    <text evidence="6">Belongs to the secreted LysM effector family.</text>
</comment>